<sequence length="389" mass="41550">MSFDLAARLAERQAADLFRQRPLLQTPQGPQVRADDQELLAFCSNDYLGLANHPEVIRALQLGAEKWGVGGGASHLVIGHSTPHHELEEALAEFTGRPRALLFSTGYMANLAVVTALLGQGDSVLQDRLNHASLLDAGLLCGARFSRYLHNDAVSLANRLRKASGNCLVVTDGVFSMDGDLADLPVLCAEARARDAWVMVDDAHGFGPLGATGGGIVEHFGLGLDEVQVLVGTLGKAFGTAGAFVAGSEELIETLIQFARPYIYTTSQPPAVACATLKSLELLRREGWRREHLQRLIARFRQGAAEIGLSLMDSPTPIQPILVGDSARALKLSALLKDRGLLVGAIRPPTVPAGSARLRVTLSAAHSEAQLELLLEALAECWPQVQADA</sequence>
<organism>
    <name type="scientific">Ectopseudomonas mendocina (strain ymp)</name>
    <name type="common">Pseudomonas mendocina</name>
    <dbReference type="NCBI Taxonomy" id="399739"/>
    <lineage>
        <taxon>Bacteria</taxon>
        <taxon>Pseudomonadati</taxon>
        <taxon>Pseudomonadota</taxon>
        <taxon>Gammaproteobacteria</taxon>
        <taxon>Pseudomonadales</taxon>
        <taxon>Pseudomonadaceae</taxon>
        <taxon>Ectopseudomonas</taxon>
    </lineage>
</organism>
<name>BIOF_ECTM1</name>
<evidence type="ECO:0000255" key="1">
    <source>
        <dbReference type="HAMAP-Rule" id="MF_01693"/>
    </source>
</evidence>
<reference key="1">
    <citation type="submission" date="2007-04" db="EMBL/GenBank/DDBJ databases">
        <title>Complete sequence of Pseudomonas mendocina ymp.</title>
        <authorList>
            <consortium name="US DOE Joint Genome Institute"/>
            <person name="Copeland A."/>
            <person name="Lucas S."/>
            <person name="Lapidus A."/>
            <person name="Barry K."/>
            <person name="Glavina del Rio T."/>
            <person name="Dalin E."/>
            <person name="Tice H."/>
            <person name="Pitluck S."/>
            <person name="Kiss H."/>
            <person name="Brettin T."/>
            <person name="Detter J.C."/>
            <person name="Bruce D."/>
            <person name="Han C."/>
            <person name="Schmutz J."/>
            <person name="Larimer F."/>
            <person name="Land M."/>
            <person name="Hauser L."/>
            <person name="Kyrpides N."/>
            <person name="Mikhailova N."/>
            <person name="Hersman L."/>
            <person name="Dubois J."/>
            <person name="Maurice P."/>
            <person name="Richardson P."/>
        </authorList>
    </citation>
    <scope>NUCLEOTIDE SEQUENCE [LARGE SCALE GENOMIC DNA]</scope>
    <source>
        <strain>ymp</strain>
    </source>
</reference>
<feature type="chain" id="PRO_0000381077" description="8-amino-7-oxononanoate synthase">
    <location>
        <begin position="1"/>
        <end position="389"/>
    </location>
</feature>
<feature type="binding site" evidence="1">
    <location>
        <position position="19"/>
    </location>
    <ligand>
        <name>substrate</name>
    </ligand>
</feature>
<feature type="binding site" evidence="1">
    <location>
        <begin position="106"/>
        <end position="107"/>
    </location>
    <ligand>
        <name>pyridoxal 5'-phosphate</name>
        <dbReference type="ChEBI" id="CHEBI:597326"/>
    </ligand>
</feature>
<feature type="binding site" evidence="1">
    <location>
        <position position="131"/>
    </location>
    <ligand>
        <name>substrate</name>
    </ligand>
</feature>
<feature type="binding site" evidence="1">
    <location>
        <position position="176"/>
    </location>
    <ligand>
        <name>pyridoxal 5'-phosphate</name>
        <dbReference type="ChEBI" id="CHEBI:597326"/>
    </ligand>
</feature>
<feature type="binding site" evidence="1">
    <location>
        <position position="204"/>
    </location>
    <ligand>
        <name>pyridoxal 5'-phosphate</name>
        <dbReference type="ChEBI" id="CHEBI:597326"/>
    </ligand>
</feature>
<feature type="binding site" evidence="1">
    <location>
        <position position="233"/>
    </location>
    <ligand>
        <name>pyridoxal 5'-phosphate</name>
        <dbReference type="ChEBI" id="CHEBI:597326"/>
    </ligand>
</feature>
<feature type="binding site" evidence="1">
    <location>
        <position position="350"/>
    </location>
    <ligand>
        <name>substrate</name>
    </ligand>
</feature>
<feature type="modified residue" description="N6-(pyridoxal phosphate)lysine" evidence="1">
    <location>
        <position position="236"/>
    </location>
</feature>
<dbReference type="EC" id="2.3.1.47" evidence="1"/>
<dbReference type="EMBL" id="CP000680">
    <property type="protein sequence ID" value="ABP86834.1"/>
    <property type="molecule type" value="Genomic_DNA"/>
</dbReference>
<dbReference type="SMR" id="A4XZR8"/>
<dbReference type="STRING" id="399739.Pmen_4087"/>
<dbReference type="KEGG" id="pmy:Pmen_4087"/>
<dbReference type="PATRIC" id="fig|399739.8.peg.4139"/>
<dbReference type="eggNOG" id="COG0156">
    <property type="taxonomic scope" value="Bacteria"/>
</dbReference>
<dbReference type="HOGENOM" id="CLU_015846_11_0_6"/>
<dbReference type="OrthoDB" id="9807157at2"/>
<dbReference type="UniPathway" id="UPA00078"/>
<dbReference type="GO" id="GO:0008710">
    <property type="term" value="F:8-amino-7-oxononanoate synthase activity"/>
    <property type="evidence" value="ECO:0007669"/>
    <property type="project" value="UniProtKB-UniRule"/>
</dbReference>
<dbReference type="GO" id="GO:0030170">
    <property type="term" value="F:pyridoxal phosphate binding"/>
    <property type="evidence" value="ECO:0007669"/>
    <property type="project" value="UniProtKB-UniRule"/>
</dbReference>
<dbReference type="GO" id="GO:0009102">
    <property type="term" value="P:biotin biosynthetic process"/>
    <property type="evidence" value="ECO:0007669"/>
    <property type="project" value="UniProtKB-UniRule"/>
</dbReference>
<dbReference type="CDD" id="cd06454">
    <property type="entry name" value="KBL_like"/>
    <property type="match status" value="1"/>
</dbReference>
<dbReference type="Gene3D" id="3.90.1150.10">
    <property type="entry name" value="Aspartate Aminotransferase, domain 1"/>
    <property type="match status" value="1"/>
</dbReference>
<dbReference type="Gene3D" id="3.40.640.10">
    <property type="entry name" value="Type I PLP-dependent aspartate aminotransferase-like (Major domain)"/>
    <property type="match status" value="1"/>
</dbReference>
<dbReference type="HAMAP" id="MF_01693">
    <property type="entry name" value="BioF_aminotrans_2"/>
    <property type="match status" value="1"/>
</dbReference>
<dbReference type="InterPro" id="IPR001917">
    <property type="entry name" value="Aminotrans_II_pyridoxalP_BS"/>
</dbReference>
<dbReference type="InterPro" id="IPR004839">
    <property type="entry name" value="Aminotransferase_I/II_large"/>
</dbReference>
<dbReference type="InterPro" id="IPR050087">
    <property type="entry name" value="AON_synthase_class-II"/>
</dbReference>
<dbReference type="InterPro" id="IPR004723">
    <property type="entry name" value="AONS_Archaea/Proteobacteria"/>
</dbReference>
<dbReference type="InterPro" id="IPR022834">
    <property type="entry name" value="AONS_Proteobacteria"/>
</dbReference>
<dbReference type="InterPro" id="IPR015424">
    <property type="entry name" value="PyrdxlP-dep_Trfase"/>
</dbReference>
<dbReference type="InterPro" id="IPR015421">
    <property type="entry name" value="PyrdxlP-dep_Trfase_major"/>
</dbReference>
<dbReference type="InterPro" id="IPR015422">
    <property type="entry name" value="PyrdxlP-dep_Trfase_small"/>
</dbReference>
<dbReference type="NCBIfam" id="TIGR00858">
    <property type="entry name" value="bioF"/>
    <property type="match status" value="1"/>
</dbReference>
<dbReference type="PANTHER" id="PTHR13693:SF100">
    <property type="entry name" value="8-AMINO-7-OXONONANOATE SYNTHASE"/>
    <property type="match status" value="1"/>
</dbReference>
<dbReference type="PANTHER" id="PTHR13693">
    <property type="entry name" value="CLASS II AMINOTRANSFERASE/8-AMINO-7-OXONONANOATE SYNTHASE"/>
    <property type="match status" value="1"/>
</dbReference>
<dbReference type="Pfam" id="PF00155">
    <property type="entry name" value="Aminotran_1_2"/>
    <property type="match status" value="1"/>
</dbReference>
<dbReference type="SUPFAM" id="SSF53383">
    <property type="entry name" value="PLP-dependent transferases"/>
    <property type="match status" value="1"/>
</dbReference>
<dbReference type="PROSITE" id="PS00599">
    <property type="entry name" value="AA_TRANSFER_CLASS_2"/>
    <property type="match status" value="1"/>
</dbReference>
<accession>A4XZR8</accession>
<protein>
    <recommendedName>
        <fullName evidence="1">8-amino-7-oxononanoate synthase</fullName>
        <shortName evidence="1">AONS</shortName>
        <ecNumber evidence="1">2.3.1.47</ecNumber>
    </recommendedName>
    <alternativeName>
        <fullName evidence="1">7-keto-8-amino-pelargonic acid synthase</fullName>
        <shortName evidence="1">7-KAP synthase</shortName>
        <shortName evidence="1">KAPA synthase</shortName>
    </alternativeName>
    <alternativeName>
        <fullName evidence="1">8-amino-7-ketopelargonate synthase</fullName>
    </alternativeName>
</protein>
<proteinExistence type="inferred from homology"/>
<gene>
    <name evidence="1" type="primary">bioF</name>
    <name type="ordered locus">Pmen_4087</name>
</gene>
<keyword id="KW-0093">Biotin biosynthesis</keyword>
<keyword id="KW-0663">Pyridoxal phosphate</keyword>
<keyword id="KW-0808">Transferase</keyword>
<comment type="function">
    <text evidence="1">Catalyzes the decarboxylative condensation of pimeloyl-[acyl-carrier protein] and L-alanine to produce 8-amino-7-oxononanoate (AON), [acyl-carrier protein], and carbon dioxide.</text>
</comment>
<comment type="catalytic activity">
    <reaction evidence="1">
        <text>6-carboxyhexanoyl-[ACP] + L-alanine + H(+) = (8S)-8-amino-7-oxononanoate + holo-[ACP] + CO2</text>
        <dbReference type="Rhea" id="RHEA:42288"/>
        <dbReference type="Rhea" id="RHEA-COMP:9685"/>
        <dbReference type="Rhea" id="RHEA-COMP:9955"/>
        <dbReference type="ChEBI" id="CHEBI:15378"/>
        <dbReference type="ChEBI" id="CHEBI:16526"/>
        <dbReference type="ChEBI" id="CHEBI:57972"/>
        <dbReference type="ChEBI" id="CHEBI:64479"/>
        <dbReference type="ChEBI" id="CHEBI:78846"/>
        <dbReference type="ChEBI" id="CHEBI:149468"/>
        <dbReference type="EC" id="2.3.1.47"/>
    </reaction>
</comment>
<comment type="cofactor">
    <cofactor evidence="1">
        <name>pyridoxal 5'-phosphate</name>
        <dbReference type="ChEBI" id="CHEBI:597326"/>
    </cofactor>
</comment>
<comment type="pathway">
    <text evidence="1">Cofactor biosynthesis; biotin biosynthesis.</text>
</comment>
<comment type="subunit">
    <text evidence="1">Homodimer.</text>
</comment>
<comment type="similarity">
    <text evidence="1">Belongs to the class-II pyridoxal-phosphate-dependent aminotransferase family. BioF subfamily.</text>
</comment>